<proteinExistence type="evidence at transcript level"/>
<accession>Q4WQZ1</accession>
<evidence type="ECO:0000250" key="1">
    <source>
        <dbReference type="UniProtKB" id="Q0CCX9"/>
    </source>
</evidence>
<evidence type="ECO:0000269" key="2">
    <source>
    </source>
</evidence>
<evidence type="ECO:0000269" key="3">
    <source>
    </source>
</evidence>
<evidence type="ECO:0000269" key="4">
    <source>
    </source>
</evidence>
<evidence type="ECO:0000303" key="5">
    <source>
    </source>
</evidence>
<evidence type="ECO:0000303" key="6">
    <source>
    </source>
</evidence>
<evidence type="ECO:0000305" key="7"/>
<evidence type="ECO:0000305" key="8">
    <source>
    </source>
</evidence>
<evidence type="ECO:0000305" key="9">
    <source>
    </source>
</evidence>
<reference key="1">
    <citation type="journal article" date="2005" name="Nature">
        <title>Genomic sequence of the pathogenic and allergenic filamentous fungus Aspergillus fumigatus.</title>
        <authorList>
            <person name="Nierman W.C."/>
            <person name="Pain A."/>
            <person name="Anderson M.J."/>
            <person name="Wortman J.R."/>
            <person name="Kim H.S."/>
            <person name="Arroyo J."/>
            <person name="Berriman M."/>
            <person name="Abe K."/>
            <person name="Archer D.B."/>
            <person name="Bermejo C."/>
            <person name="Bennett J.W."/>
            <person name="Bowyer P."/>
            <person name="Chen D."/>
            <person name="Collins M."/>
            <person name="Coulsen R."/>
            <person name="Davies R."/>
            <person name="Dyer P.S."/>
            <person name="Farman M.L."/>
            <person name="Fedorova N."/>
            <person name="Fedorova N.D."/>
            <person name="Feldblyum T.V."/>
            <person name="Fischer R."/>
            <person name="Fosker N."/>
            <person name="Fraser A."/>
            <person name="Garcia J.L."/>
            <person name="Garcia M.J."/>
            <person name="Goble A."/>
            <person name="Goldman G.H."/>
            <person name="Gomi K."/>
            <person name="Griffith-Jones S."/>
            <person name="Gwilliam R."/>
            <person name="Haas B.J."/>
            <person name="Haas H."/>
            <person name="Harris D.E."/>
            <person name="Horiuchi H."/>
            <person name="Huang J."/>
            <person name="Humphray S."/>
            <person name="Jimenez J."/>
            <person name="Keller N."/>
            <person name="Khouri H."/>
            <person name="Kitamoto K."/>
            <person name="Kobayashi T."/>
            <person name="Konzack S."/>
            <person name="Kulkarni R."/>
            <person name="Kumagai T."/>
            <person name="Lafton A."/>
            <person name="Latge J.-P."/>
            <person name="Li W."/>
            <person name="Lord A."/>
            <person name="Lu C."/>
            <person name="Majoros W.H."/>
            <person name="May G.S."/>
            <person name="Miller B.L."/>
            <person name="Mohamoud Y."/>
            <person name="Molina M."/>
            <person name="Monod M."/>
            <person name="Mouyna I."/>
            <person name="Mulligan S."/>
            <person name="Murphy L.D."/>
            <person name="O'Neil S."/>
            <person name="Paulsen I."/>
            <person name="Penalva M.A."/>
            <person name="Pertea M."/>
            <person name="Price C."/>
            <person name="Pritchard B.L."/>
            <person name="Quail M.A."/>
            <person name="Rabbinowitsch E."/>
            <person name="Rawlins N."/>
            <person name="Rajandream M.A."/>
            <person name="Reichard U."/>
            <person name="Renauld H."/>
            <person name="Robson G.D."/>
            <person name="Rodriguez de Cordoba S."/>
            <person name="Rodriguez-Pena J.M."/>
            <person name="Ronning C.M."/>
            <person name="Rutter S."/>
            <person name="Salzberg S.L."/>
            <person name="Sanchez M."/>
            <person name="Sanchez-Ferrero J.C."/>
            <person name="Saunders D."/>
            <person name="Seeger K."/>
            <person name="Squares R."/>
            <person name="Squares S."/>
            <person name="Takeuchi M."/>
            <person name="Tekaia F."/>
            <person name="Turner G."/>
            <person name="Vazquez de Aldana C.R."/>
            <person name="Weidman J."/>
            <person name="White O."/>
            <person name="Woodward J.R."/>
            <person name="Yu J.-H."/>
            <person name="Fraser C.M."/>
            <person name="Galagan J.E."/>
            <person name="Asai K."/>
            <person name="Machida M."/>
            <person name="Hall N."/>
            <person name="Barrell B.G."/>
            <person name="Denning D.W."/>
        </authorList>
    </citation>
    <scope>NUCLEOTIDE SEQUENCE [LARGE SCALE GENOMIC DNA]</scope>
    <source>
        <strain>ATCC MYA-4609 / CBS 101355 / FGSC A1100 / Af293</strain>
    </source>
</reference>
<reference key="2">
    <citation type="journal article" date="2012" name="PLoS ONE">
        <title>Trypacidin, a spore-borne toxin from Aspergillus fumigatus, is cytotoxic to lung cells.</title>
        <authorList>
            <person name="Gauthier T."/>
            <person name="Wang X."/>
            <person name="Sifuentes Dos Santos J."/>
            <person name="Fysikopoulos A."/>
            <person name="Tadrist S."/>
            <person name="Canlet C."/>
            <person name="Artigot M.P."/>
            <person name="Loiseau N."/>
            <person name="Oswald I.P."/>
            <person name="Puel O."/>
        </authorList>
    </citation>
    <scope>FUNCTION</scope>
    <scope>TISSUE SPECIFICITY</scope>
</reference>
<reference key="3">
    <citation type="journal article" date="2015" name="Appl. Microbiol. Biotechnol.">
        <title>Identification of the antiphagocytic trypacidin gene cluster in the human-pathogenic fungus Aspergillus fumigatus.</title>
        <authorList>
            <person name="Mattern D.J."/>
            <person name="Schoeler H."/>
            <person name="Weber J."/>
            <person name="Novohradska S."/>
            <person name="Kraibooj K."/>
            <person name="Dahse H.M."/>
            <person name="Hillmann F."/>
            <person name="Valiante V."/>
            <person name="Figge M.T."/>
            <person name="Brakhage A.A."/>
        </authorList>
    </citation>
    <scope>FUNCTION</scope>
</reference>
<reference key="4">
    <citation type="journal article" date="2016" name="Environ. Microbiol.">
        <title>Redundant synthesis of a conidial polyketide by two distinct secondary metabolite clusters in Aspergillus fumigatus.</title>
        <authorList>
            <person name="Throckmorton K."/>
            <person name="Lim F.Y."/>
            <person name="Kontoyiannis D.P."/>
            <person name="Zheng W."/>
            <person name="Keller N.P."/>
        </authorList>
    </citation>
    <scope>FUNCTION</scope>
</reference>
<comment type="function">
    <text evidence="1 2 3 4">Oxidoreductase; part of the gene cluster that mediates the biosynthesis of trypacidin, a mycotoxin with antiprotozoal activity and that plays a role in the infection process (PubMed:26242966, PubMed:26278536). The pathway begins with the synthesis of atrochrysone thioester by the polyketide synthase (PKS) tpcC (PubMed:26242966). The atrochrysone carboxyl ACP thioesterase tpcB then breaks the thioester bond and releases the atrochrysone carboxylic acid from tpcC (PubMed:26242966). The decarboxylase tpcK converts atrochrysone carboxylic acid to atrochrysone which is further reduced into emodin anthrone (PubMed:26242966). The next step is performed by the emodin anthrone oxygenase tpcL that catalyzes the oxidation of emodinanthrone to emodin (PubMed:26242966). Emodin O-methyltransferase encoded by tpcA catalyzes methylation of the 8-hydroxy group of emodin to form questin (PubMed:26242966). Ring cleavage of questin by questin oxidase tpcI leads to desmethylsulochrin via several intermediates including questin epoxide (By similarity). Another methylation step catalyzed by tpcM leads to the formation of sulochrin which is further converted to monomethylsulfochrin by tpcH. Finally, the tpcJ catalyzes the conversion of monomethylsulfochrin to trypacidin (PubMed:26242966). Trypacidin is toxic for human pulmonary and bronchial epithelial cells by initiating the intracellular formation of nitric oxide (NO) and hydrogen peroxide (H(2)O(2)), thus triggering host necrotic cell death (PubMed:22319557). The trypacidin pathway is also able to produce endocrocin via a distinct route from the endocrocin Enc pathway (PubMed:26242966).</text>
</comment>
<comment type="pathway">
    <text evidence="9">Secondary metabolite biosynthesis.</text>
</comment>
<comment type="tissue specificity">
    <text evidence="8">Specifically expressed in conidia (PubMed:22319557).</text>
</comment>
<comment type="similarity">
    <text evidence="7">Belongs to the avfA family.</text>
</comment>
<gene>
    <name evidence="5" type="primary">tpcG</name>
    <name evidence="6" type="synonym">tynG</name>
    <name type="ORF">AFUA_4G14520</name>
</gene>
<feature type="chain" id="PRO_0000437064" description="Oxidoreductase tpcG">
    <location>
        <begin position="1"/>
        <end position="263"/>
    </location>
</feature>
<keyword id="KW-0503">Monooxygenase</keyword>
<keyword id="KW-0560">Oxidoreductase</keyword>
<keyword id="KW-1185">Reference proteome</keyword>
<organism>
    <name type="scientific">Aspergillus fumigatus (strain ATCC MYA-4609 / CBS 101355 / FGSC A1100 / Af293)</name>
    <name type="common">Neosartorya fumigata</name>
    <dbReference type="NCBI Taxonomy" id="330879"/>
    <lineage>
        <taxon>Eukaryota</taxon>
        <taxon>Fungi</taxon>
        <taxon>Dikarya</taxon>
        <taxon>Ascomycota</taxon>
        <taxon>Pezizomycotina</taxon>
        <taxon>Eurotiomycetes</taxon>
        <taxon>Eurotiomycetidae</taxon>
        <taxon>Eurotiales</taxon>
        <taxon>Aspergillaceae</taxon>
        <taxon>Aspergillus</taxon>
        <taxon>Aspergillus subgen. Fumigati</taxon>
    </lineage>
</organism>
<protein>
    <recommendedName>
        <fullName evidence="5">Oxidoreductase tpcG</fullName>
        <ecNumber evidence="9">1.-.-.-</ecNumber>
    </recommendedName>
    <alternativeName>
        <fullName evidence="5">Trypacidin synthesis protein G</fullName>
    </alternativeName>
</protein>
<dbReference type="EC" id="1.-.-.-" evidence="9"/>
<dbReference type="EMBL" id="AAHF01000005">
    <property type="protein sequence ID" value="EAL89343.1"/>
    <property type="molecule type" value="Genomic_DNA"/>
</dbReference>
<dbReference type="RefSeq" id="XP_751381.1">
    <property type="nucleotide sequence ID" value="XM_746288.1"/>
</dbReference>
<dbReference type="SMR" id="Q4WQZ1"/>
<dbReference type="STRING" id="330879.Q4WQZ1"/>
<dbReference type="EnsemblFungi" id="EAL89343">
    <property type="protein sequence ID" value="EAL89343"/>
    <property type="gene ID" value="AFUA_4G14520"/>
</dbReference>
<dbReference type="GeneID" id="3509605"/>
<dbReference type="KEGG" id="afm:AFUA_4G14520"/>
<dbReference type="VEuPathDB" id="FungiDB:Afu4g14520"/>
<dbReference type="eggNOG" id="ENOG502SM0C">
    <property type="taxonomic scope" value="Eukaryota"/>
</dbReference>
<dbReference type="HOGENOM" id="CLU_090039_1_0_1"/>
<dbReference type="InParanoid" id="Q4WQZ1"/>
<dbReference type="OMA" id="GAPMCIF"/>
<dbReference type="OrthoDB" id="10254221at2759"/>
<dbReference type="Proteomes" id="UP000002530">
    <property type="component" value="Chromosome 4"/>
</dbReference>
<dbReference type="GO" id="GO:0004497">
    <property type="term" value="F:monooxygenase activity"/>
    <property type="evidence" value="ECO:0007669"/>
    <property type="project" value="UniProtKB-KW"/>
</dbReference>
<dbReference type="GO" id="GO:0044550">
    <property type="term" value="P:secondary metabolite biosynthetic process"/>
    <property type="evidence" value="ECO:0000317"/>
    <property type="project" value="AspGD"/>
</dbReference>
<dbReference type="FunFam" id="3.40.50.720:FF:000680">
    <property type="entry name" value="AflX/ ordB/ monooxygenase/ oxidase"/>
    <property type="match status" value="1"/>
</dbReference>
<dbReference type="Gene3D" id="3.40.50.720">
    <property type="entry name" value="NAD(P)-binding Rossmann-like Domain"/>
    <property type="match status" value="1"/>
</dbReference>
<dbReference type="InterPro" id="IPR016040">
    <property type="entry name" value="NAD(P)-bd_dom"/>
</dbReference>
<dbReference type="InterPro" id="IPR036291">
    <property type="entry name" value="NAD(P)-bd_dom_sf"/>
</dbReference>
<dbReference type="PANTHER" id="PTHR15020">
    <property type="entry name" value="FLAVIN REDUCTASE-RELATED"/>
    <property type="match status" value="1"/>
</dbReference>
<dbReference type="PANTHER" id="PTHR15020:SF37">
    <property type="entry name" value="OXIDOREDUCTASE MDPK"/>
    <property type="match status" value="1"/>
</dbReference>
<dbReference type="Pfam" id="PF13460">
    <property type="entry name" value="NAD_binding_10"/>
    <property type="match status" value="1"/>
</dbReference>
<dbReference type="SUPFAM" id="SSF51735">
    <property type="entry name" value="NAD(P)-binding Rossmann-fold domains"/>
    <property type="match status" value="1"/>
</dbReference>
<sequence>MPYAVLGATGNCGTALIQNLLQSSTSKVHAYCRDRRKLLYLLPHLADNKQVDIFDGSIHDLPLITECVRNCHAVFLVISTNDNVPQCRMALDTATAVIQALRILHGEGASMPKLVLLSSATLDDQLSQNTAPWVRWILLKSASQVYQDLSQAEAFLRQQQDWISTIFIKPGGLSVDVQRGHRLSLTEEKSPLSYLDLAAAMIEAADDPDGRYDLRNVGVAYTDGPARFPRGAPMCIFMGLVRHFLPFLHPYLPATGPNQGFLC</sequence>
<name>TPCG_ASPFU</name>